<organism>
    <name type="scientific">Human immunodeficiency virus type 2 subtype A (isolate BEN)</name>
    <name type="common">HIV-2</name>
    <dbReference type="NCBI Taxonomy" id="11714"/>
    <lineage>
        <taxon>Viruses</taxon>
        <taxon>Riboviria</taxon>
        <taxon>Pararnavirae</taxon>
        <taxon>Artverviricota</taxon>
        <taxon>Revtraviricetes</taxon>
        <taxon>Ortervirales</taxon>
        <taxon>Retroviridae</taxon>
        <taxon>Orthoretrovirinae</taxon>
        <taxon>Lentivirus</taxon>
        <taxon>Human immunodeficiency virus 2</taxon>
    </lineage>
</organism>
<organismHost>
    <name type="scientific">Homo sapiens</name>
    <name type="common">Human</name>
    <dbReference type="NCBI Taxonomy" id="9606"/>
</organismHost>
<proteinExistence type="evidence at transcript level"/>
<protein>
    <recommendedName>
        <fullName>Virion infectivity factor</fullName>
        <shortName>Vif</shortName>
    </recommendedName>
    <alternativeName>
        <fullName>Q protein</fullName>
    </alternativeName>
    <alternativeName>
        <fullName>SOR protein</fullName>
    </alternativeName>
</protein>
<evidence type="ECO:0000250" key="1"/>
<evidence type="ECO:0000305" key="2"/>
<accession>P18097</accession>
<reference key="1">
    <citation type="journal article" date="1990" name="Virology">
        <title>A novel proviral clone of HIV-2: biological and phylogenetic relationship to other primate immunodeficiency viruses.</title>
        <authorList>
            <person name="Kirchhoff F."/>
            <person name="Jentsch K."/>
            <person name="Bachmann B."/>
            <person name="Stuke A."/>
            <person name="Laloux C."/>
            <person name="Lueke W."/>
            <person name="Stahl-Henning C."/>
            <person name="Schneider J."/>
            <person name="Nieselt K."/>
            <person name="Eigen M."/>
            <person name="Hunsmann G."/>
        </authorList>
    </citation>
    <scope>NUCLEOTIDE SEQUENCE [GENOMIC DNA]</scope>
</reference>
<feature type="chain" id="PRO_0000085317" description="Virion infectivity factor">
    <location>
        <begin position="1"/>
        <end position="215"/>
    </location>
</feature>
<feature type="region of interest" description="Multimerization" evidence="1">
    <location>
        <begin position="154"/>
        <end position="167"/>
    </location>
</feature>
<feature type="short sequence motif" description="HCCH motif" evidence="1">
    <location>
        <begin position="110"/>
        <end position="141"/>
    </location>
</feature>
<feature type="short sequence motif" description="BC-box-like motif" evidence="1">
    <location>
        <begin position="147"/>
        <end position="156"/>
    </location>
</feature>
<feature type="modified residue" description="Phosphothreonine; by host MAP4K1" evidence="1">
    <location>
        <position position="98"/>
    </location>
</feature>
<feature type="modified residue" description="Phosphoserine; by host" evidence="1">
    <location>
        <position position="147"/>
    </location>
</feature>
<keyword id="KW-0014">AIDS</keyword>
<keyword id="KW-1032">Host cell membrane</keyword>
<keyword id="KW-1035">Host cytoplasm</keyword>
<keyword id="KW-1043">Host membrane</keyword>
<keyword id="KW-0945">Host-virus interaction</keyword>
<keyword id="KW-0472">Membrane</keyword>
<keyword id="KW-0597">Phosphoprotein</keyword>
<keyword id="KW-1185">Reference proteome</keyword>
<keyword id="KW-0832">Ubl conjugation</keyword>
<keyword id="KW-0833">Ubl conjugation pathway</keyword>
<keyword id="KW-0946">Virion</keyword>
<dbReference type="EMBL" id="M30502">
    <property type="protein sequence ID" value="AAB00738.1"/>
    <property type="molecule type" value="Genomic_DNA"/>
</dbReference>
<dbReference type="RefSeq" id="NP_056839.1">
    <property type="nucleotide sequence ID" value="NC_001722.1"/>
</dbReference>
<dbReference type="SMR" id="P18097"/>
<dbReference type="BioGRID" id="1205548">
    <property type="interactions" value="1"/>
</dbReference>
<dbReference type="KEGG" id="vg:1724712"/>
<dbReference type="Proteomes" id="UP000002242">
    <property type="component" value="Segment"/>
</dbReference>
<dbReference type="GO" id="GO:0030430">
    <property type="term" value="C:host cell cytoplasm"/>
    <property type="evidence" value="ECO:0007669"/>
    <property type="project" value="UniProtKB-SubCell"/>
</dbReference>
<dbReference type="GO" id="GO:0020002">
    <property type="term" value="C:host cell plasma membrane"/>
    <property type="evidence" value="ECO:0007669"/>
    <property type="project" value="UniProtKB-SubCell"/>
</dbReference>
<dbReference type="GO" id="GO:0016020">
    <property type="term" value="C:membrane"/>
    <property type="evidence" value="ECO:0007669"/>
    <property type="project" value="UniProtKB-KW"/>
</dbReference>
<dbReference type="GO" id="GO:0044423">
    <property type="term" value="C:virion component"/>
    <property type="evidence" value="ECO:0007669"/>
    <property type="project" value="UniProtKB-KW"/>
</dbReference>
<dbReference type="GO" id="GO:0019058">
    <property type="term" value="P:viral life cycle"/>
    <property type="evidence" value="ECO:0007669"/>
    <property type="project" value="InterPro"/>
</dbReference>
<dbReference type="InterPro" id="IPR000475">
    <property type="entry name" value="Vif"/>
</dbReference>
<dbReference type="Pfam" id="PF00559">
    <property type="entry name" value="Vif"/>
    <property type="match status" value="1"/>
</dbReference>
<dbReference type="PRINTS" id="PR00349">
    <property type="entry name" value="VIRIONINFFCT"/>
</dbReference>
<name>VIF_HV2BE</name>
<sequence>MEEDRNWIVVPTWRVPGRMEKWHALVKYLKYRTKDLEEVRYVPHHKVGWAWWTCSRVIFPLQGKSHLEIQAYWNLTPEKGWLSSHAVRLTWYTEKFWTDVTPDCADILIHSTYFSCFTAGEVRRAIRGEKLLSCCNYPQAHKAQVPSLQYLALVVVQQNDRPQRKGTARKQWRRDHWRGLRVAREDHRSLKQGGSEPSAPRAHFPGVAKVLEILA</sequence>
<gene>
    <name type="primary">vif</name>
</gene>
<comment type="function">
    <text evidence="1">Counteracts the innate antiviral activity of APOBEC3G. Forms a complex with host APOBEC3G thus preventing the entry of this lethally hypermutating enzyme into progeny virions. Functions as an adapter molecule, recruiting APOBEC3G to the ubiquitin-proteasome machinery. Targets APOBEC3G for degradation through the assembly with elongin BC complex, CUL5 and RBX1. Binds viral RNA and affects the stability of viral nucleoprotein core. May play a role in viral morphology (By similarity).</text>
</comment>
<comment type="subunit">
    <text evidence="1">Homomultimer; in vitro and presumably in vivo. Interacts with viral Pr55Gag precursor and human APOBEC3G. The interaction between Vif and APOBEC3G is species-specific, which may play a role in restricting the replication of HIV to humans. Forms an E3 ligase complex by interacting with human CUL5 and elongin BC complex (ELOB and ELOC) (By similarity).</text>
</comment>
<comment type="subcellular location">
    <subcellularLocation>
        <location evidence="1">Host cytoplasm</location>
    </subcellularLocation>
    <subcellularLocation>
        <location evidence="1">Host cell membrane</location>
        <topology evidence="1">Peripheral membrane protein</topology>
        <orientation evidence="1">Cytoplasmic side</orientation>
    </subcellularLocation>
    <subcellularLocation>
        <location evidence="1">Virion</location>
    </subcellularLocation>
    <text evidence="1">In the cytoplasm, seems to colocalize with intermediate filament vimentin. A fraction is associated with the cytoplasmic side of cellular membranes, presumably via the interaction with Pr55Gag precursor (By similarity).</text>
</comment>
<comment type="induction">
    <text>Expressed late during infection in a Rev-dependent manner.</text>
</comment>
<comment type="domain">
    <text evidence="1">The BC-like-box motif mediates the interaction with elongin BC complex.</text>
</comment>
<comment type="domain">
    <text evidence="1">The HCCH motif (H-x(5)-C-x(18)-C-x(5)-H) mediates the interaction with CUL5.</text>
</comment>
<comment type="PTM">
    <text evidence="1">Processed in virion by the viral protease.</text>
</comment>
<comment type="PTM">
    <text evidence="1">Highly phosphorylated on serine and threonine residues.</text>
</comment>
<comment type="PTM">
    <text evidence="1">Polyubiquitinated and degraded by the proteasome in the presence of APOBEC3G.</text>
</comment>
<comment type="miscellaneous">
    <text>Required for replication in 'nonpermissive' cells, including primary T-cells, macrophages and certain T-cell lines, but is dispensable for replication in 'permissive' cell lines, such as 293T cells. In nonpermissive cells, Vif-defective viruses can produce virions, but they fail to complete reverse transcription and cannot successfully infect new cells.</text>
</comment>
<comment type="miscellaneous">
    <text>Vif-defective viruses show catastrophic failure in reverse transcription due to APOBEC-induced mutations that initiate a DNA base repair pathway and compromise the structural integrity of the ssDNA. In the absence of Vif, the virion is morphologically abnormal.</text>
</comment>
<comment type="miscellaneous">
    <text>This isolate is from a German AIDS patient (with predominantly neurological complications) who was probably infected in Mali.</text>
</comment>
<comment type="similarity">
    <text evidence="2">Belongs to the primate lentivirus group Vif protein family.</text>
</comment>